<organism>
    <name type="scientific">Mus musculus</name>
    <name type="common">Mouse</name>
    <dbReference type="NCBI Taxonomy" id="10090"/>
    <lineage>
        <taxon>Eukaryota</taxon>
        <taxon>Metazoa</taxon>
        <taxon>Chordata</taxon>
        <taxon>Craniata</taxon>
        <taxon>Vertebrata</taxon>
        <taxon>Euteleostomi</taxon>
        <taxon>Mammalia</taxon>
        <taxon>Eutheria</taxon>
        <taxon>Euarchontoglires</taxon>
        <taxon>Glires</taxon>
        <taxon>Rodentia</taxon>
        <taxon>Myomorpha</taxon>
        <taxon>Muroidea</taxon>
        <taxon>Muridae</taxon>
        <taxon>Murinae</taxon>
        <taxon>Mus</taxon>
        <taxon>Mus</taxon>
    </lineage>
</organism>
<evidence type="ECO:0000250" key="1"/>
<evidence type="ECO:0000250" key="2">
    <source>
        <dbReference type="UniProtKB" id="P00738"/>
    </source>
</evidence>
<evidence type="ECO:0000250" key="3">
    <source>
        <dbReference type="UniProtKB" id="Q8SPS7"/>
    </source>
</evidence>
<evidence type="ECO:0000255" key="4"/>
<evidence type="ECO:0000255" key="5">
    <source>
        <dbReference type="PROSITE-ProRule" id="PRU00274"/>
    </source>
</evidence>
<evidence type="ECO:0000255" key="6">
    <source>
        <dbReference type="PROSITE-ProRule" id="PRU00302"/>
    </source>
</evidence>
<evidence type="ECO:0000269" key="7">
    <source>
    </source>
</evidence>
<evidence type="ECO:0000305" key="8"/>
<comment type="function">
    <text evidence="1">As a result of hemolysis, hemoglobin is found to accumulate in the kidney and is secreted in the urine. Haptoglobin captures, and combines with free plasma hemoglobin to allow hepatic recycling of heme iron and to prevent kidney damage. Haptoglobin also acts as an antioxidant, has antibacterial activity and plays a role in modulating many aspects of the acute phase response. Hemoglobin/haptoglobin complexes are rapidly cleared by the macrophage CD163 scavenger receptor expressed on the surface of liver Kupfer cells through an endocytic lysosomal degradation pathway (By similarity).</text>
</comment>
<comment type="subunit">
    <text evidence="2 3">Tetramer of two alpha and two beta chains; disulfide-linked (By similarity). The hemoglobin/haptoglobin complex is composed of a haptoglobin dimer bound to two hemoglobin alpha-beta dimers (By similarity). Interacts with CD163 (By similarity). Interacts with ERGIC3 (By similarity).</text>
</comment>
<comment type="subcellular location">
    <subcellularLocation>
        <location evidence="1">Secreted</location>
    </subcellularLocation>
</comment>
<comment type="tissue specificity">
    <text>Expressed by the liver and secreted in plasma.</text>
</comment>
<comment type="domain">
    <text evidence="1">The beta chain mediates most of the interactions with both subunits of hemoglobin, while the alpha chain forms the homodimeric interface.</text>
</comment>
<comment type="similarity">
    <text evidence="5">Belongs to the peptidase S1 family.</text>
</comment>
<comment type="caution">
    <text evidence="8">Although homologous to serine proteases, it has lost all essential catalytic residues and has no enzymatic activity.</text>
</comment>
<protein>
    <recommendedName>
        <fullName>Haptoglobin</fullName>
    </recommendedName>
    <component>
        <recommendedName>
            <fullName>Haptoglobin alpha chain</fullName>
        </recommendedName>
    </component>
    <component>
        <recommendedName>
            <fullName>Haptoglobin beta chain</fullName>
        </recommendedName>
    </component>
</protein>
<feature type="signal peptide" evidence="4">
    <location>
        <begin position="1"/>
        <end position="18"/>
    </location>
</feature>
<feature type="chain" id="PRO_0000028462" description="Haptoglobin">
    <location>
        <begin position="19"/>
        <end position="347"/>
    </location>
</feature>
<feature type="chain" id="PRO_0000028463" description="Haptoglobin alpha chain">
    <location>
        <begin position="19"/>
        <end position="101"/>
    </location>
</feature>
<feature type="chain" id="PRO_0000028464" description="Haptoglobin beta chain">
    <location>
        <begin position="103"/>
        <end position="347"/>
    </location>
</feature>
<feature type="domain" description="Sushi" evidence="6">
    <location>
        <begin position="31"/>
        <end position="88"/>
    </location>
</feature>
<feature type="domain" description="Peptidase S1" evidence="5">
    <location>
        <begin position="103"/>
        <end position="345"/>
    </location>
</feature>
<feature type="region of interest" description="Interaction with CD163" evidence="1">
    <location>
        <begin position="259"/>
        <end position="264"/>
    </location>
</feature>
<feature type="glycosylation site" description="N-linked (GlcNAc...) asparagine" evidence="7">
    <location>
        <position position="148"/>
    </location>
</feature>
<feature type="glycosylation site" description="N-linked (GlcNAc...) asparagine" evidence="7">
    <location>
        <position position="182"/>
    </location>
</feature>
<feature type="glycosylation site" description="N-linked (GlcNAc...) asparagine" evidence="7">
    <location>
        <position position="256"/>
    </location>
</feature>
<feature type="glycosylation site" description="N-linked (GlcNAc...) asparagine" evidence="4">
    <location>
        <position position="264"/>
    </location>
</feature>
<feature type="disulfide bond" description="Interchain" evidence="1">
    <location>
        <position position="33"/>
    </location>
</feature>
<feature type="disulfide bond" evidence="1">
    <location>
        <begin position="52"/>
        <end position="86"/>
    </location>
</feature>
<feature type="disulfide bond" description="Interchain (between alpha and beta chains)" evidence="5 6">
    <location>
        <begin position="90"/>
        <end position="207"/>
    </location>
</feature>
<feature type="disulfide bond" evidence="1">
    <location>
        <begin position="250"/>
        <end position="281"/>
    </location>
</feature>
<feature type="disulfide bond" evidence="1">
    <location>
        <begin position="292"/>
        <end position="322"/>
    </location>
</feature>
<reference key="1">
    <citation type="submission" date="1992-07" db="EMBL/GenBank/DDBJ databases">
        <title>Expression of haptoglobin in mouse adipose tissue.</title>
        <authorList>
            <person name="Ponte P.A."/>
            <person name="White R.T."/>
            <person name="Uyeda C.M."/>
            <person name="Coleman R.T."/>
        </authorList>
    </citation>
    <scope>NUCLEOTIDE SEQUENCE [MRNA]</scope>
    <source>
        <strain>C57BL/6J</strain>
    </source>
</reference>
<reference key="2">
    <citation type="journal article" date="2006" name="J. Proteome Res.">
        <title>Proteome-wide characterization of N-glycosylation events by diagonal chromatography.</title>
        <authorList>
            <person name="Ghesquiere B."/>
            <person name="Van Damme J."/>
            <person name="Martens L."/>
            <person name="Vandekerckhove J."/>
            <person name="Gevaert K."/>
        </authorList>
    </citation>
    <scope>GLYCOSYLATION [LARGE SCALE ANALYSIS] AT ASN-148; ASN-182 AND ASN-256</scope>
    <source>
        <strain>C57BL/6J</strain>
        <tissue>Plasma</tissue>
    </source>
</reference>
<reference key="3">
    <citation type="journal article" date="2010" name="Cell">
        <title>A tissue-specific atlas of mouse protein phosphorylation and expression.</title>
        <authorList>
            <person name="Huttlin E.L."/>
            <person name="Jedrychowski M.P."/>
            <person name="Elias J.E."/>
            <person name="Goswami T."/>
            <person name="Rad R."/>
            <person name="Beausoleil S.A."/>
            <person name="Villen J."/>
            <person name="Haas W."/>
            <person name="Sowa M.E."/>
            <person name="Gygi S.P."/>
        </authorList>
    </citation>
    <scope>IDENTIFICATION BY MASS SPECTROMETRY [LARGE SCALE ANALYSIS]</scope>
    <source>
        <tissue>Liver</tissue>
        <tissue>Lung</tissue>
        <tissue>Spleen</tissue>
    </source>
</reference>
<sequence length="347" mass="38752">MRALGAVVTLLLWGQLFAVELGNDAMDFEDDSCPKPPEIANGYVEHLVRYRCRQFYRLRAEGDGVYTLNDEKQWVNTVAGEKLPECEAVCGKPKHPVDQVQRIIGGSMDAKGSFPWQAKMISRHGLTTGATLISDQWLLTTAKNLFLNHSETASAKDITPTLTLYVGKNQLVEIEKVVLHPNHSVVDIGLIKLKQRVLVTERVMPICLPSKDYIAPGRVGYVSGWGRNANFRFTDRLKYVMLPVADQDKCVVHYENSTVPEKKNLTSPVGVQPILNEHTFCAGLTKYQEDTCYGDAGSAFAIHDMEEDTWYAAGILSFDKSCAVAEYGVYVRATDLKDWVQETMAKN</sequence>
<gene>
    <name type="primary">Hp</name>
</gene>
<keyword id="KW-0011">Acute phase</keyword>
<keyword id="KW-0044">Antibiotic</keyword>
<keyword id="KW-0929">Antimicrobial</keyword>
<keyword id="KW-0049">Antioxidant</keyword>
<keyword id="KW-1015">Disulfide bond</keyword>
<keyword id="KW-0325">Glycoprotein</keyword>
<keyword id="KW-0351">Hemoglobin-binding</keyword>
<keyword id="KW-0391">Immunity</keyword>
<keyword id="KW-1185">Reference proteome</keyword>
<keyword id="KW-0964">Secreted</keyword>
<keyword id="KW-0721">Serine protease homolog</keyword>
<keyword id="KW-0732">Signal</keyword>
<keyword id="KW-0768">Sushi</keyword>
<proteinExistence type="evidence at protein level"/>
<name>HPT_MOUSE</name>
<dbReference type="EMBL" id="M96827">
    <property type="protein sequence ID" value="AAA37779.1"/>
    <property type="molecule type" value="mRNA"/>
</dbReference>
<dbReference type="CCDS" id="CCDS40470.1"/>
<dbReference type="RefSeq" id="NP_059066.1">
    <property type="nucleotide sequence ID" value="NM_017370.2"/>
</dbReference>
<dbReference type="SMR" id="Q61646"/>
<dbReference type="BioGRID" id="200400">
    <property type="interactions" value="8"/>
</dbReference>
<dbReference type="FunCoup" id="Q61646">
    <property type="interactions" value="231"/>
</dbReference>
<dbReference type="STRING" id="10090.ENSMUSP00000074436"/>
<dbReference type="MEROPS" id="S01.972"/>
<dbReference type="CarbonylDB" id="Q61646"/>
<dbReference type="GlyConnect" id="717">
    <property type="glycosylation" value="1 N-Linked glycan (2 sites)"/>
</dbReference>
<dbReference type="GlyCosmos" id="Q61646">
    <property type="glycosylation" value="4 sites, 2 glycans"/>
</dbReference>
<dbReference type="GlyGen" id="Q61646">
    <property type="glycosylation" value="5 sites, 6 N-linked glycans (4 sites), 1 O-linked glycan (1 site)"/>
</dbReference>
<dbReference type="iPTMnet" id="Q61646"/>
<dbReference type="PhosphoSitePlus" id="Q61646"/>
<dbReference type="SwissPalm" id="Q61646"/>
<dbReference type="CPTAC" id="non-CPTAC-3406"/>
<dbReference type="CPTAC" id="non-CPTAC-3407"/>
<dbReference type="CPTAC" id="non-CPTAC-5609"/>
<dbReference type="jPOST" id="Q61646"/>
<dbReference type="PaxDb" id="10090-ENSMUSP00000074436"/>
<dbReference type="PeptideAtlas" id="Q61646"/>
<dbReference type="ProteomicsDB" id="273170"/>
<dbReference type="Pumba" id="Q61646"/>
<dbReference type="DNASU" id="15439"/>
<dbReference type="Ensembl" id="ENSMUST00000074898.8">
    <property type="protein sequence ID" value="ENSMUSP00000074436.7"/>
    <property type="gene ID" value="ENSMUSG00000031722.11"/>
</dbReference>
<dbReference type="GeneID" id="15439"/>
<dbReference type="KEGG" id="mmu:15439"/>
<dbReference type="UCSC" id="uc009nin.2">
    <property type="organism name" value="mouse"/>
</dbReference>
<dbReference type="AGR" id="MGI:96211"/>
<dbReference type="CTD" id="3240"/>
<dbReference type="MGI" id="MGI:96211">
    <property type="gene designation" value="Hp"/>
</dbReference>
<dbReference type="VEuPathDB" id="HostDB:ENSMUSG00000031722"/>
<dbReference type="eggNOG" id="KOG3627">
    <property type="taxonomic scope" value="Eukaryota"/>
</dbReference>
<dbReference type="GeneTree" id="ENSGT00940000159903"/>
<dbReference type="HOGENOM" id="CLU_006842_0_0_1"/>
<dbReference type="InParanoid" id="Q61646"/>
<dbReference type="OMA" id="NFRFTEH"/>
<dbReference type="OrthoDB" id="6339452at2759"/>
<dbReference type="PhylomeDB" id="Q61646"/>
<dbReference type="TreeFam" id="TF334326"/>
<dbReference type="Reactome" id="R-MMU-2168880">
    <property type="pathway name" value="Scavenging of heme from plasma"/>
</dbReference>
<dbReference type="Reactome" id="R-MMU-6798695">
    <property type="pathway name" value="Neutrophil degranulation"/>
</dbReference>
<dbReference type="BioGRID-ORCS" id="15439">
    <property type="hits" value="5 hits in 78 CRISPR screens"/>
</dbReference>
<dbReference type="ChiTaRS" id="Hp">
    <property type="organism name" value="mouse"/>
</dbReference>
<dbReference type="PRO" id="PR:Q61646"/>
<dbReference type="Proteomes" id="UP000000589">
    <property type="component" value="Chromosome 8"/>
</dbReference>
<dbReference type="RNAct" id="Q61646">
    <property type="molecule type" value="protein"/>
</dbReference>
<dbReference type="Bgee" id="ENSMUSG00000031722">
    <property type="expression patterns" value="Expressed in lacrimal gland and 118 other cell types or tissues"/>
</dbReference>
<dbReference type="ExpressionAtlas" id="Q61646">
    <property type="expression patterns" value="baseline and differential"/>
</dbReference>
<dbReference type="GO" id="GO:0005615">
    <property type="term" value="C:extracellular space"/>
    <property type="evidence" value="ECO:0007005"/>
    <property type="project" value="BHF-UCL"/>
</dbReference>
<dbReference type="GO" id="GO:0016209">
    <property type="term" value="F:antioxidant activity"/>
    <property type="evidence" value="ECO:0007669"/>
    <property type="project" value="UniProtKB-KW"/>
</dbReference>
<dbReference type="GO" id="GO:0030492">
    <property type="term" value="F:hemoglobin binding"/>
    <property type="evidence" value="ECO:0007669"/>
    <property type="project" value="UniProtKB-KW"/>
</dbReference>
<dbReference type="GO" id="GO:0006953">
    <property type="term" value="P:acute-phase response"/>
    <property type="evidence" value="ECO:0007669"/>
    <property type="project" value="UniProtKB-KW"/>
</dbReference>
<dbReference type="GO" id="GO:0042742">
    <property type="term" value="P:defense response to bacterium"/>
    <property type="evidence" value="ECO:0007669"/>
    <property type="project" value="UniProtKB-KW"/>
</dbReference>
<dbReference type="GO" id="GO:0002376">
    <property type="term" value="P:immune system process"/>
    <property type="evidence" value="ECO:0007669"/>
    <property type="project" value="UniProtKB-KW"/>
</dbReference>
<dbReference type="GO" id="GO:0007219">
    <property type="term" value="P:Notch signaling pathway"/>
    <property type="evidence" value="ECO:0000314"/>
    <property type="project" value="MGI"/>
</dbReference>
<dbReference type="GO" id="GO:0009617">
    <property type="term" value="P:response to bacterium"/>
    <property type="evidence" value="ECO:0000270"/>
    <property type="project" value="MGI"/>
</dbReference>
<dbReference type="CDD" id="cd00033">
    <property type="entry name" value="CCP"/>
    <property type="match status" value="1"/>
</dbReference>
<dbReference type="CDD" id="cd00190">
    <property type="entry name" value="Tryp_SPc"/>
    <property type="match status" value="1"/>
</dbReference>
<dbReference type="FunFam" id="2.10.70.10:FF:000048">
    <property type="entry name" value="Haptoglobin"/>
    <property type="match status" value="1"/>
</dbReference>
<dbReference type="FunFam" id="2.40.10.10:FF:000027">
    <property type="entry name" value="Haptoglobin"/>
    <property type="match status" value="1"/>
</dbReference>
<dbReference type="FunFam" id="2.40.10.10:FF:000031">
    <property type="entry name" value="Haptoglobin"/>
    <property type="match status" value="1"/>
</dbReference>
<dbReference type="Gene3D" id="2.10.70.10">
    <property type="entry name" value="Complement Module, domain 1"/>
    <property type="match status" value="1"/>
</dbReference>
<dbReference type="Gene3D" id="2.40.10.10">
    <property type="entry name" value="Trypsin-like serine proteases"/>
    <property type="match status" value="2"/>
</dbReference>
<dbReference type="InterPro" id="IPR008292">
    <property type="entry name" value="Haptoglobin"/>
</dbReference>
<dbReference type="InterPro" id="IPR009003">
    <property type="entry name" value="Peptidase_S1_PA"/>
</dbReference>
<dbReference type="InterPro" id="IPR043504">
    <property type="entry name" value="Peptidase_S1_PA_chymotrypsin"/>
</dbReference>
<dbReference type="InterPro" id="IPR001314">
    <property type="entry name" value="Peptidase_S1A"/>
</dbReference>
<dbReference type="InterPro" id="IPR035976">
    <property type="entry name" value="Sushi/SCR/CCP_sf"/>
</dbReference>
<dbReference type="InterPro" id="IPR000436">
    <property type="entry name" value="Sushi_SCR_CCP_dom"/>
</dbReference>
<dbReference type="InterPro" id="IPR001254">
    <property type="entry name" value="Trypsin_dom"/>
</dbReference>
<dbReference type="PANTHER" id="PTHR24255">
    <property type="entry name" value="COMPLEMENT COMPONENT 1, S SUBCOMPONENT-RELATED"/>
    <property type="match status" value="1"/>
</dbReference>
<dbReference type="PANTHER" id="PTHR24255:SF27">
    <property type="entry name" value="HAPTOGLOBIN-RELATED PROTEIN"/>
    <property type="match status" value="1"/>
</dbReference>
<dbReference type="Pfam" id="PF00089">
    <property type="entry name" value="Trypsin"/>
    <property type="match status" value="1"/>
</dbReference>
<dbReference type="PIRSF" id="PIRSF001137">
    <property type="entry name" value="Haptoglobin"/>
    <property type="match status" value="1"/>
</dbReference>
<dbReference type="PRINTS" id="PR00722">
    <property type="entry name" value="CHYMOTRYPSIN"/>
</dbReference>
<dbReference type="SMART" id="SM00020">
    <property type="entry name" value="Tryp_SPc"/>
    <property type="match status" value="1"/>
</dbReference>
<dbReference type="SUPFAM" id="SSF57535">
    <property type="entry name" value="Complement control module/SCR domain"/>
    <property type="match status" value="1"/>
</dbReference>
<dbReference type="SUPFAM" id="SSF50494">
    <property type="entry name" value="Trypsin-like serine proteases"/>
    <property type="match status" value="1"/>
</dbReference>
<dbReference type="PROSITE" id="PS50923">
    <property type="entry name" value="SUSHI"/>
    <property type="match status" value="1"/>
</dbReference>
<dbReference type="PROSITE" id="PS50240">
    <property type="entry name" value="TRYPSIN_DOM"/>
    <property type="match status" value="1"/>
</dbReference>
<accession>Q61646</accession>